<sequence>MSQPRPLLSPPETEEQLLAQAQQLSGYTLGELAALAGLVTPENLKRDKGWIGVLLEIWLGASAGSKPEQDFAALGVELKTIPVDSLGRPLETTFVCVAPLTGNSGVTWETSHVRHKLKRVLWIPVEGERSIPLAQRRVGSPLLWSPNEEEDRQLREDWEELMDMIVLGQVERITARHGEYLQIRPKAANAKALTEAIGARGERILTLPRGFYLKKNFTSALLARHFLIQ</sequence>
<dbReference type="EMBL" id="CU928145">
    <property type="protein sequence ID" value="CAU99020.1"/>
    <property type="molecule type" value="Genomic_DNA"/>
</dbReference>
<dbReference type="RefSeq" id="WP_000082188.1">
    <property type="nucleotide sequence ID" value="NC_011748.1"/>
</dbReference>
<dbReference type="SMR" id="B7LF08"/>
<dbReference type="GeneID" id="93779167"/>
<dbReference type="KEGG" id="eck:EC55989_3107"/>
<dbReference type="HOGENOM" id="CLU_086669_0_0_6"/>
<dbReference type="Proteomes" id="UP000000746">
    <property type="component" value="Chromosome"/>
</dbReference>
<dbReference type="GO" id="GO:0005737">
    <property type="term" value="C:cytoplasm"/>
    <property type="evidence" value="ECO:0007669"/>
    <property type="project" value="UniProtKB-SubCell"/>
</dbReference>
<dbReference type="GO" id="GO:0003677">
    <property type="term" value="F:DNA binding"/>
    <property type="evidence" value="ECO:0007669"/>
    <property type="project" value="InterPro"/>
</dbReference>
<dbReference type="GO" id="GO:0004519">
    <property type="term" value="F:endonuclease activity"/>
    <property type="evidence" value="ECO:0007669"/>
    <property type="project" value="UniProtKB-UniRule"/>
</dbReference>
<dbReference type="GO" id="GO:0006304">
    <property type="term" value="P:DNA modification"/>
    <property type="evidence" value="ECO:0007669"/>
    <property type="project" value="InterPro"/>
</dbReference>
<dbReference type="GO" id="GO:0006298">
    <property type="term" value="P:mismatch repair"/>
    <property type="evidence" value="ECO:0007669"/>
    <property type="project" value="UniProtKB-UniRule"/>
</dbReference>
<dbReference type="CDD" id="cd00583">
    <property type="entry name" value="MutH-like"/>
    <property type="match status" value="1"/>
</dbReference>
<dbReference type="FunFam" id="3.40.600.10:FF:000001">
    <property type="entry name" value="DNA mismatch repair protein MutH"/>
    <property type="match status" value="1"/>
</dbReference>
<dbReference type="Gene3D" id="3.40.600.10">
    <property type="entry name" value="DNA mismatch repair MutH/Restriction endonuclease, type II"/>
    <property type="match status" value="1"/>
</dbReference>
<dbReference type="HAMAP" id="MF_00759">
    <property type="entry name" value="MutH"/>
    <property type="match status" value="1"/>
</dbReference>
<dbReference type="InterPro" id="IPR004230">
    <property type="entry name" value="DNA_mismatch_repair_MutH"/>
</dbReference>
<dbReference type="InterPro" id="IPR011337">
    <property type="entry name" value="DNA_rep_MutH/RE_typeII_Sau3AI"/>
</dbReference>
<dbReference type="InterPro" id="IPR037057">
    <property type="entry name" value="DNA_rep_MutH/T2_RE_sf"/>
</dbReference>
<dbReference type="InterPro" id="IPR011335">
    <property type="entry name" value="Restrct_endonuc-II-like"/>
</dbReference>
<dbReference type="NCBIfam" id="TIGR02248">
    <property type="entry name" value="mutH_TIGR"/>
    <property type="match status" value="1"/>
</dbReference>
<dbReference type="NCBIfam" id="NF003458">
    <property type="entry name" value="PRK05070.1"/>
    <property type="match status" value="1"/>
</dbReference>
<dbReference type="Pfam" id="PF02976">
    <property type="entry name" value="MutH"/>
    <property type="match status" value="1"/>
</dbReference>
<dbReference type="SMART" id="SM00927">
    <property type="entry name" value="MutH"/>
    <property type="match status" value="1"/>
</dbReference>
<dbReference type="SUPFAM" id="SSF52980">
    <property type="entry name" value="Restriction endonuclease-like"/>
    <property type="match status" value="1"/>
</dbReference>
<evidence type="ECO:0000255" key="1">
    <source>
        <dbReference type="HAMAP-Rule" id="MF_00759"/>
    </source>
</evidence>
<organism>
    <name type="scientific">Escherichia coli (strain 55989 / EAEC)</name>
    <dbReference type="NCBI Taxonomy" id="585055"/>
    <lineage>
        <taxon>Bacteria</taxon>
        <taxon>Pseudomonadati</taxon>
        <taxon>Pseudomonadota</taxon>
        <taxon>Gammaproteobacteria</taxon>
        <taxon>Enterobacterales</taxon>
        <taxon>Enterobacteriaceae</taxon>
        <taxon>Escherichia</taxon>
    </lineage>
</organism>
<protein>
    <recommendedName>
        <fullName evidence="1">DNA mismatch repair protein MutH</fullName>
    </recommendedName>
    <alternativeName>
        <fullName evidence="1">Methyl-directed mismatch repair protein</fullName>
    </alternativeName>
</protein>
<feature type="chain" id="PRO_1000148398" description="DNA mismatch repair protein MutH">
    <location>
        <begin position="1"/>
        <end position="229"/>
    </location>
</feature>
<gene>
    <name evidence="1" type="primary">mutH</name>
    <name type="ordered locus">EC55989_3107</name>
</gene>
<comment type="function">
    <text evidence="1">Sequence-specific endonuclease that cleaves unmethylated GATC sequences. It is involved in DNA mismatch repair.</text>
</comment>
<comment type="subcellular location">
    <subcellularLocation>
        <location evidence="1">Cytoplasm</location>
    </subcellularLocation>
</comment>
<comment type="similarity">
    <text evidence="1">Belongs to the MutH family.</text>
</comment>
<reference key="1">
    <citation type="journal article" date="2009" name="PLoS Genet.">
        <title>Organised genome dynamics in the Escherichia coli species results in highly diverse adaptive paths.</title>
        <authorList>
            <person name="Touchon M."/>
            <person name="Hoede C."/>
            <person name="Tenaillon O."/>
            <person name="Barbe V."/>
            <person name="Baeriswyl S."/>
            <person name="Bidet P."/>
            <person name="Bingen E."/>
            <person name="Bonacorsi S."/>
            <person name="Bouchier C."/>
            <person name="Bouvet O."/>
            <person name="Calteau A."/>
            <person name="Chiapello H."/>
            <person name="Clermont O."/>
            <person name="Cruveiller S."/>
            <person name="Danchin A."/>
            <person name="Diard M."/>
            <person name="Dossat C."/>
            <person name="Karoui M.E."/>
            <person name="Frapy E."/>
            <person name="Garry L."/>
            <person name="Ghigo J.M."/>
            <person name="Gilles A.M."/>
            <person name="Johnson J."/>
            <person name="Le Bouguenec C."/>
            <person name="Lescat M."/>
            <person name="Mangenot S."/>
            <person name="Martinez-Jehanne V."/>
            <person name="Matic I."/>
            <person name="Nassif X."/>
            <person name="Oztas S."/>
            <person name="Petit M.A."/>
            <person name="Pichon C."/>
            <person name="Rouy Z."/>
            <person name="Ruf C.S."/>
            <person name="Schneider D."/>
            <person name="Tourret J."/>
            <person name="Vacherie B."/>
            <person name="Vallenet D."/>
            <person name="Medigue C."/>
            <person name="Rocha E.P.C."/>
            <person name="Denamur E."/>
        </authorList>
    </citation>
    <scope>NUCLEOTIDE SEQUENCE [LARGE SCALE GENOMIC DNA]</scope>
    <source>
        <strain>55989 / EAEC</strain>
    </source>
</reference>
<name>MUTH_ECO55</name>
<keyword id="KW-0963">Cytoplasm</keyword>
<keyword id="KW-0227">DNA damage</keyword>
<keyword id="KW-0234">DNA repair</keyword>
<keyword id="KW-0255">Endonuclease</keyword>
<keyword id="KW-0378">Hydrolase</keyword>
<keyword id="KW-0540">Nuclease</keyword>
<keyword id="KW-1185">Reference proteome</keyword>
<proteinExistence type="inferred from homology"/>
<accession>B7LF08</accession>